<feature type="peptide" id="PRO_0000044901" description="Chlorotoxin-like peptide Bs 14" evidence="4">
    <location>
        <begin position="1"/>
        <end position="36"/>
    </location>
</feature>
<feature type="disulfide bond" evidence="1 3">
    <location>
        <begin position="1"/>
        <end position="18"/>
    </location>
</feature>
<feature type="disulfide bond" evidence="1 3">
    <location>
        <begin position="4"/>
        <end position="25"/>
    </location>
</feature>
<feature type="disulfide bond" evidence="1 3">
    <location>
        <begin position="15"/>
        <end position="30"/>
    </location>
</feature>
<feature type="disulfide bond" evidence="1 3">
    <location>
        <begin position="19"/>
        <end position="32"/>
    </location>
</feature>
<comment type="function">
    <text evidence="2">Toxin with unknown function in healthy organisms. On glioma cells, interacts with chloride channels (probably ClC-3/CLCN3) and MMP2 at the surface of glioma cells. This complex is then internalized via caveolae, thus inhibiting the chloride channels necessary for cell shrinkage and tumor propagation (By similarity).</text>
</comment>
<comment type="subcellular location">
    <subcellularLocation>
        <location evidence="4">Secreted</location>
    </subcellularLocation>
</comment>
<comment type="tissue specificity">
    <text evidence="6">Expressed by the venom gland.</text>
</comment>
<comment type="domain">
    <text evidence="1">The presence of a 'disulfide through disulfide knot' structurally defines this protein as a knottin.</text>
</comment>
<comment type="mass spectrometry"/>
<comment type="similarity">
    <text evidence="3">Belongs to the short scorpion toxin superfamily. Chloride channel inhibitor family.</text>
</comment>
<reference key="1">
    <citation type="journal article" date="1998" name="Comp. Biochem. Physiol.">
        <title>Purification and primary structure of low molecular mass peptides from scorpion (Buthus sindicus) venom.</title>
        <authorList>
            <person name="Ali S.A."/>
            <person name="Stoeva S."/>
            <person name="Schuetz J."/>
            <person name="Kayed R."/>
            <person name="Abbasi A."/>
            <person name="Zaidi Z.H."/>
            <person name="Voelter W."/>
        </authorList>
    </citation>
    <scope>PROTEIN SEQUENCE</scope>
    <scope>MASS SPECTROMETRY</scope>
    <scope>SUBCELLULAR LOCATION</scope>
    <source>
        <tissue>Venom</tissue>
    </source>
</reference>
<name>CTXL_HOTTS</name>
<organism>
    <name type="scientific">Hottentotta tamulus sindicus</name>
    <name type="common">Scorpion</name>
    <name type="synonym">Buthus sindicus</name>
    <dbReference type="NCBI Taxonomy" id="42519"/>
    <lineage>
        <taxon>Eukaryota</taxon>
        <taxon>Metazoa</taxon>
        <taxon>Ecdysozoa</taxon>
        <taxon>Arthropoda</taxon>
        <taxon>Chelicerata</taxon>
        <taxon>Arachnida</taxon>
        <taxon>Scorpiones</taxon>
        <taxon>Buthida</taxon>
        <taxon>Buthoidea</taxon>
        <taxon>Buthidae</taxon>
        <taxon>Mesobuthus</taxon>
    </lineage>
</organism>
<evidence type="ECO:0000250" key="1">
    <source>
        <dbReference type="UniProtKB" id="P15222"/>
    </source>
</evidence>
<evidence type="ECO:0000250" key="2">
    <source>
        <dbReference type="UniProtKB" id="Q9UAD0"/>
    </source>
</evidence>
<evidence type="ECO:0000255" key="3">
    <source>
        <dbReference type="PROSITE-ProRule" id="PRU00545"/>
    </source>
</evidence>
<evidence type="ECO:0000269" key="4">
    <source>
    </source>
</evidence>
<evidence type="ECO:0000303" key="5">
    <source>
    </source>
</evidence>
<evidence type="ECO:0000305" key="6">
    <source>
    </source>
</evidence>
<sequence>CGPCFTKDPETEKKCATCCGGIGRCFGPQCLCNRGY</sequence>
<protein>
    <recommendedName>
        <fullName evidence="5">Chlorotoxin-like peptide Bs 14</fullName>
        <shortName evidence="5">Bs14</shortName>
    </recommendedName>
</protein>
<accession>P59887</accession>
<keyword id="KW-1265">Chloride channel impairing toxin</keyword>
<keyword id="KW-0903">Direct protein sequencing</keyword>
<keyword id="KW-1015">Disulfide bond</keyword>
<keyword id="KW-0872">Ion channel impairing toxin</keyword>
<keyword id="KW-0960">Knottin</keyword>
<keyword id="KW-0964">Secreted</keyword>
<keyword id="KW-0800">Toxin</keyword>
<keyword id="KW-0870">Voltage-gated chloride channel impairing toxin</keyword>
<dbReference type="SMR" id="P59887"/>
<dbReference type="GO" id="GO:0005576">
    <property type="term" value="C:extracellular region"/>
    <property type="evidence" value="ECO:0007669"/>
    <property type="project" value="UniProtKB-SubCell"/>
</dbReference>
<dbReference type="GO" id="GO:0017081">
    <property type="term" value="F:chloride channel regulator activity"/>
    <property type="evidence" value="ECO:0007669"/>
    <property type="project" value="UniProtKB-KW"/>
</dbReference>
<dbReference type="GO" id="GO:0090729">
    <property type="term" value="F:toxin activity"/>
    <property type="evidence" value="ECO:0007669"/>
    <property type="project" value="UniProtKB-KW"/>
</dbReference>
<dbReference type="InterPro" id="IPR036574">
    <property type="entry name" value="Scorpion_toxin-like_sf"/>
</dbReference>
<dbReference type="InterPro" id="IPR007958">
    <property type="entry name" value="Scorpion_toxinS_Cl_inh"/>
</dbReference>
<dbReference type="Pfam" id="PF05294">
    <property type="entry name" value="Toxin_5"/>
    <property type="match status" value="1"/>
</dbReference>
<dbReference type="SUPFAM" id="SSF57095">
    <property type="entry name" value="Scorpion toxin-like"/>
    <property type="match status" value="1"/>
</dbReference>
<dbReference type="PROSITE" id="PS51200">
    <property type="entry name" value="SHORT_SCORPION_CHLORIDE"/>
    <property type="match status" value="1"/>
</dbReference>
<proteinExistence type="evidence at protein level"/>